<protein>
    <recommendedName>
        <fullName>Cytochrome c oxidase subunit 2</fullName>
        <ecNumber>7.1.1.9</ecNumber>
    </recommendedName>
    <alternativeName>
        <fullName>Cytochrome c ba(3) subunit II</fullName>
    </alternativeName>
    <alternativeName>
        <fullName>Cytochrome c oxidase polypeptide II</fullName>
    </alternativeName>
    <alternativeName>
        <fullName>Cytochrome cba3 subunit 2</fullName>
    </alternativeName>
</protein>
<reference key="1">
    <citation type="journal article" date="1999" name="Nat. Struct. Biol.">
        <title>The CuA domain of Thermus thermophilus ba3-type cytochrome c oxidase at 1.6-A resolution.</title>
        <authorList>
            <person name="Williams P.A."/>
            <person name="Blackburn N.J."/>
            <person name="Sanders D."/>
            <person name="Bellamy H."/>
            <person name="Stura E.A."/>
            <person name="Fee J.A."/>
            <person name="McRee D.E."/>
        </authorList>
    </citation>
    <scope>X-RAY CRYSTALLOGRAPHY (1.6 ANGSTROMS)</scope>
</reference>
<keyword id="KW-0002">3D-structure</keyword>
<keyword id="KW-1003">Cell membrane</keyword>
<keyword id="KW-0186">Copper</keyword>
<keyword id="KW-0249">Electron transport</keyword>
<keyword id="KW-0472">Membrane</keyword>
<keyword id="KW-0479">Metal-binding</keyword>
<keyword id="KW-0679">Respiratory chain</keyword>
<keyword id="KW-1278">Translocase</keyword>
<keyword id="KW-0812">Transmembrane</keyword>
<keyword id="KW-0813">Transport</keyword>
<comment type="function">
    <text>Subunits I and II form the functional core of the enzyme complex. Electrons originating in cytochrome c are transferred via heme a and Cu(A) to the binuclear center formed by heme a3 and Cu(B).</text>
</comment>
<comment type="catalytic activity">
    <reaction>
        <text>4 Fe(II)-[cytochrome c] + O2 + 8 H(+)(in) = 4 Fe(III)-[cytochrome c] + 2 H2O + 4 H(+)(out)</text>
        <dbReference type="Rhea" id="RHEA:11436"/>
        <dbReference type="Rhea" id="RHEA-COMP:10350"/>
        <dbReference type="Rhea" id="RHEA-COMP:14399"/>
        <dbReference type="ChEBI" id="CHEBI:15377"/>
        <dbReference type="ChEBI" id="CHEBI:15378"/>
        <dbReference type="ChEBI" id="CHEBI:15379"/>
        <dbReference type="ChEBI" id="CHEBI:29033"/>
        <dbReference type="ChEBI" id="CHEBI:29034"/>
        <dbReference type="EC" id="7.1.1.9"/>
    </reaction>
</comment>
<comment type="subcellular location">
    <subcellularLocation>
        <location>Cell membrane</location>
        <topology>Peripheral membrane protein</topology>
    </subcellularLocation>
</comment>
<comment type="similarity">
    <text evidence="1">Belongs to the cytochrome c oxidase subunit 2 family.</text>
</comment>
<comment type="caution">
    <text evidence="1">The sequence shown here has been extracted from PDB entry 2CUA.</text>
</comment>
<name>COX2_THETH</name>
<accession>P98052</accession>
<evidence type="ECO:0000305" key="1"/>
<evidence type="ECO:0007829" key="2">
    <source>
        <dbReference type="PDB" id="2CUA"/>
    </source>
</evidence>
<evidence type="ECO:0007829" key="3">
    <source>
        <dbReference type="PDB" id="2FWL"/>
    </source>
</evidence>
<evidence type="ECO:0007829" key="4">
    <source>
        <dbReference type="PDB" id="2LLN"/>
    </source>
</evidence>
<sequence>AYTLATHTAGVIPAGKLERVDPTTVRQEGPWADPAQAVVQTGPNQYTVYVLAFAFGYQPNPIEVPQGAEIVFKITSPDVIHGFHVEGTNINVEVLPGEVSTVRYTFKRPGEYRIICNQYCGLGHQNMFGTIVVKE</sequence>
<proteinExistence type="evidence at protein level"/>
<gene>
    <name type="primary">cbaB</name>
    <name type="synonym">ctaC</name>
</gene>
<dbReference type="EC" id="7.1.1.9"/>
<dbReference type="PDB" id="1XME">
    <property type="method" value="X-ray"/>
    <property type="resolution" value="2.30 A"/>
    <property type="chains" value="B=1-135"/>
</dbReference>
<dbReference type="PDB" id="2CUA">
    <property type="method" value="X-ray"/>
    <property type="resolution" value="1.60 A"/>
    <property type="chains" value="A/B=1-135"/>
</dbReference>
<dbReference type="PDB" id="2FWL">
    <property type="method" value="NMR"/>
    <property type="chains" value="B=1-135"/>
</dbReference>
<dbReference type="PDB" id="2LLN">
    <property type="method" value="NMR"/>
    <property type="chains" value="A=11-135"/>
</dbReference>
<dbReference type="PDB" id="5U7N">
    <property type="method" value="X-ray"/>
    <property type="resolution" value="2.30 A"/>
    <property type="chains" value="A/B/C/D/E/F/G/H=1-135"/>
</dbReference>
<dbReference type="PDBsum" id="1XME"/>
<dbReference type="PDBsum" id="2CUA"/>
<dbReference type="PDBsum" id="2FWL"/>
<dbReference type="PDBsum" id="2LLN"/>
<dbReference type="PDBsum" id="5U7N"/>
<dbReference type="BMRB" id="P98052"/>
<dbReference type="SMR" id="P98052"/>
<dbReference type="IntAct" id="P98052">
    <property type="interactions" value="1"/>
</dbReference>
<dbReference type="DrugBank" id="DB02451">
    <property type="generic name" value="B-nonylglucoside"/>
</dbReference>
<dbReference type="EvolutionaryTrace" id="P98052"/>
<dbReference type="GO" id="GO:0005886">
    <property type="term" value="C:plasma membrane"/>
    <property type="evidence" value="ECO:0007669"/>
    <property type="project" value="UniProtKB-SubCell"/>
</dbReference>
<dbReference type="GO" id="GO:0005507">
    <property type="term" value="F:copper ion binding"/>
    <property type="evidence" value="ECO:0007669"/>
    <property type="project" value="InterPro"/>
</dbReference>
<dbReference type="GO" id="GO:0004129">
    <property type="term" value="F:cytochrome-c oxidase activity"/>
    <property type="evidence" value="ECO:0007669"/>
    <property type="project" value="UniProtKB-EC"/>
</dbReference>
<dbReference type="CDD" id="cd13913">
    <property type="entry name" value="ba3_CcO_II_C"/>
    <property type="match status" value="1"/>
</dbReference>
<dbReference type="Gene3D" id="2.60.40.420">
    <property type="entry name" value="Cupredoxins - blue copper proteins"/>
    <property type="match status" value="1"/>
</dbReference>
<dbReference type="InterPro" id="IPR034214">
    <property type="entry name" value="Ba3_CcO_II_C"/>
</dbReference>
<dbReference type="InterPro" id="IPR002429">
    <property type="entry name" value="CcO_II-like_C"/>
</dbReference>
<dbReference type="InterPro" id="IPR001505">
    <property type="entry name" value="Copper_CuA"/>
</dbReference>
<dbReference type="InterPro" id="IPR008972">
    <property type="entry name" value="Cupredoxin"/>
</dbReference>
<dbReference type="InterPro" id="IPR051403">
    <property type="entry name" value="NosZ/Cyto_c_oxidase_sub2"/>
</dbReference>
<dbReference type="PANTHER" id="PTHR42838">
    <property type="entry name" value="CYTOCHROME C OXIDASE SUBUNIT II"/>
    <property type="match status" value="1"/>
</dbReference>
<dbReference type="PANTHER" id="PTHR42838:SF2">
    <property type="entry name" value="NITROUS-OXIDE REDUCTASE"/>
    <property type="match status" value="1"/>
</dbReference>
<dbReference type="Pfam" id="PF00116">
    <property type="entry name" value="COX2"/>
    <property type="match status" value="1"/>
</dbReference>
<dbReference type="SUPFAM" id="SSF49503">
    <property type="entry name" value="Cupredoxins"/>
    <property type="match status" value="1"/>
</dbReference>
<dbReference type="PROSITE" id="PS00078">
    <property type="entry name" value="COX2"/>
    <property type="match status" value="1"/>
</dbReference>
<dbReference type="PROSITE" id="PS50857">
    <property type="entry name" value="COX2_CUA"/>
    <property type="match status" value="1"/>
</dbReference>
<organism>
    <name type="scientific">Thermus thermophilus</name>
    <dbReference type="NCBI Taxonomy" id="274"/>
    <lineage>
        <taxon>Bacteria</taxon>
        <taxon>Thermotogati</taxon>
        <taxon>Deinococcota</taxon>
        <taxon>Deinococci</taxon>
        <taxon>Thermales</taxon>
        <taxon>Thermaceae</taxon>
        <taxon>Thermus</taxon>
    </lineage>
</organism>
<feature type="chain" id="PRO_0000183721" description="Cytochrome c oxidase subunit 2">
    <location>
        <begin position="1" status="less than"/>
        <end position="135"/>
    </location>
</feature>
<feature type="binding site">
    <location>
        <position position="81"/>
    </location>
    <ligand>
        <name>Cu cation</name>
        <dbReference type="ChEBI" id="CHEBI:23378"/>
        <label>A</label>
    </ligand>
</feature>
<feature type="binding site">
    <location>
        <position position="116"/>
    </location>
    <ligand>
        <name>Cu cation</name>
        <dbReference type="ChEBI" id="CHEBI:23378"/>
        <label>A</label>
    </ligand>
</feature>
<feature type="binding site">
    <location>
        <position position="120"/>
    </location>
    <ligand>
        <name>Cu cation</name>
        <dbReference type="ChEBI" id="CHEBI:23378"/>
        <label>A</label>
    </ligand>
</feature>
<feature type="binding site">
    <location>
        <position position="124"/>
    </location>
    <ligand>
        <name>Cu cation</name>
        <dbReference type="ChEBI" id="CHEBI:23378"/>
        <label>A</label>
    </ligand>
</feature>
<feature type="non-terminal residue">
    <location>
        <position position="1"/>
    </location>
</feature>
<feature type="helix" evidence="3">
    <location>
        <begin position="3"/>
        <end position="5"/>
    </location>
</feature>
<feature type="helix" evidence="3">
    <location>
        <begin position="7"/>
        <end position="11"/>
    </location>
</feature>
<feature type="strand" evidence="4">
    <location>
        <begin position="15"/>
        <end position="19"/>
    </location>
</feature>
<feature type="turn" evidence="2">
    <location>
        <begin position="22"/>
        <end position="27"/>
    </location>
</feature>
<feature type="turn" evidence="2">
    <location>
        <begin position="30"/>
        <end position="32"/>
    </location>
</feature>
<feature type="helix" evidence="2">
    <location>
        <begin position="34"/>
        <end position="36"/>
    </location>
</feature>
<feature type="strand" evidence="2">
    <location>
        <begin position="38"/>
        <end position="42"/>
    </location>
</feature>
<feature type="strand" evidence="2">
    <location>
        <begin position="45"/>
        <end position="53"/>
    </location>
</feature>
<feature type="strand" evidence="2">
    <location>
        <begin position="56"/>
        <end position="65"/>
    </location>
</feature>
<feature type="strand" evidence="2">
    <location>
        <begin position="68"/>
        <end position="79"/>
    </location>
</feature>
<feature type="strand" evidence="2">
    <location>
        <begin position="81"/>
        <end position="85"/>
    </location>
</feature>
<feature type="turn" evidence="4">
    <location>
        <begin position="86"/>
        <end position="89"/>
    </location>
</feature>
<feature type="strand" evidence="2">
    <location>
        <begin position="91"/>
        <end position="94"/>
    </location>
</feature>
<feature type="strand" evidence="4">
    <location>
        <begin position="96"/>
        <end position="99"/>
    </location>
</feature>
<feature type="strand" evidence="2">
    <location>
        <begin position="100"/>
        <end position="105"/>
    </location>
</feature>
<feature type="strand" evidence="2">
    <location>
        <begin position="110"/>
        <end position="115"/>
    </location>
</feature>
<feature type="helix" evidence="3">
    <location>
        <begin position="124"/>
        <end position="126"/>
    </location>
</feature>
<feature type="strand" evidence="2">
    <location>
        <begin position="128"/>
        <end position="134"/>
    </location>
</feature>